<name>RPOB_ECO81</name>
<sequence>MVYSYTEKKRIRKDFGKRPQVLDVPYLLSIQLDSFQKFIEQDPEGQYGLEAAFRSVFPIQSYSGNSELQYVSYRLGEPVFDVQECQIRGVTYSAPLRVKLRLVIYEREAPEGTVKDIKEQEVYMGEIPLMTDNGTFVINGTERVIVSQLHRSPGVFFDSDKGKTHSSGKVLYNARIIPYRGSWLDFEFDPKDNLFVRIDRRRKLPATIILRALNYTTEQILDLFFEKVIFEIRDNKLQMELVPERLRGETASFDIEANGKVYVEKGRRITARHIRQLEKDDVKLIEVSVEYIAGKVVAKDYIDESTGELICAANMELSLDLLAKLSQSGHKRIETLFTNDLDHGPYISETLRVDPTNDRLSALVEIYRMMRPGEPPTREAAESLFENLFFSEDRYDLSAVGRMKFNRSLLREEIEGSGILSKDDIIDVMKKLIDIRNGKGEVDDIDHLGNRRIRSVGEMAENQFRVGLVRVERAVKERLSLGDLDTLMPQDMINAKPISAAVKEFFGSSQLSQFMDQNNPLSEITHKRRISALGPGGLTRERAGFEVRDVHPTHYGRVCPIETPEGPNIGLINSLSVYAQTNEYGFLETPYRKVTDGVVTDEIHYLSAIEEGNYVIAQANSNLDEEGHFVEDLVTCRSKGESSLFSRDQVDYMDVSTQQVVSVGASLIPFLEHDDANRALMGANMQRQAVPTLRADKPLVGTGMERAVAVDSGVTAVAKRGGVVQYVDASRIVIKVNEDEMYPGEAGIDIYNLTKYTRSNQNTCINQMPCVSLGEPVERGDVLADGPSTDLGELALGQNMRVAFMPWNGYNFEDSILVSERVVQEDRFTTIHIQELACVSRDTKLGPEEITADIPNVGEAALSKLDESGIVYIGAEVTGGDILVGKVTPKGETQLTPEEKLLRAIFGEKASDVKDSSLRVPNGVSGTVIDVQVFTRDGVEKDKRALEIEEMQLKQAKKDLSEELQILEAGLFSRIRAVLVAGGVEAEKLDKLPRDRWLELGLTDEEKQNQLEQLAEQYDELKHEFEKKLEAKRRKITQGDDLAPGVLKIVKVYLAVKRRIQPGDKMAGRHGNKGVISKINPIEDMPYDENGTPVDIVLNPLGVPSRMNIGQILETHLGMAAKGIGDKINAMLKQQQEVAKLREFIQRAYDLGADVRQKVDLSTFSDEEVMRLAENLRKGMPIATPVFDGAKEAEIKELLKLGDLPTSGQIRLYDGRTGEQFERPVTVGYMYMLKLNHLVDDKMHARSTGSYSLVTQQPLGGKAQFGGQRFGEMEVWALEAYGAAYTLQEMLTVKSDDVNGRTKMYKNIVDGNHQMEPGMPESFNVLLKEIRSLGINIELEDE</sequence>
<proteinExistence type="inferred from homology"/>
<organism>
    <name type="scientific">Escherichia coli O81 (strain ED1a)</name>
    <dbReference type="NCBI Taxonomy" id="585397"/>
    <lineage>
        <taxon>Bacteria</taxon>
        <taxon>Pseudomonadati</taxon>
        <taxon>Pseudomonadota</taxon>
        <taxon>Gammaproteobacteria</taxon>
        <taxon>Enterobacterales</taxon>
        <taxon>Enterobacteriaceae</taxon>
        <taxon>Escherichia</taxon>
    </lineage>
</organism>
<feature type="chain" id="PRO_1000165807" description="DNA-directed RNA polymerase subunit beta">
    <location>
        <begin position="1"/>
        <end position="1342"/>
    </location>
</feature>
<feature type="modified residue" description="N6-acetyllysine" evidence="1">
    <location>
        <position position="1022"/>
    </location>
</feature>
<feature type="modified residue" description="N6-acetyllysine" evidence="1">
    <location>
        <position position="1200"/>
    </location>
</feature>
<keyword id="KW-0007">Acetylation</keyword>
<keyword id="KW-0240">DNA-directed RNA polymerase</keyword>
<keyword id="KW-0548">Nucleotidyltransferase</keyword>
<keyword id="KW-0804">Transcription</keyword>
<keyword id="KW-0808">Transferase</keyword>
<comment type="function">
    <text evidence="1">DNA-dependent RNA polymerase catalyzes the transcription of DNA into RNA using the four ribonucleoside triphosphates as substrates.</text>
</comment>
<comment type="catalytic activity">
    <reaction evidence="1">
        <text>RNA(n) + a ribonucleoside 5'-triphosphate = RNA(n+1) + diphosphate</text>
        <dbReference type="Rhea" id="RHEA:21248"/>
        <dbReference type="Rhea" id="RHEA-COMP:14527"/>
        <dbReference type="Rhea" id="RHEA-COMP:17342"/>
        <dbReference type="ChEBI" id="CHEBI:33019"/>
        <dbReference type="ChEBI" id="CHEBI:61557"/>
        <dbReference type="ChEBI" id="CHEBI:140395"/>
        <dbReference type="EC" id="2.7.7.6"/>
    </reaction>
</comment>
<comment type="subunit">
    <text evidence="1">The RNAP catalytic core consists of 2 alpha, 1 beta, 1 beta' and 1 omega subunit. When a sigma factor is associated with the core the holoenzyme is formed, which can initiate transcription.</text>
</comment>
<comment type="similarity">
    <text evidence="1">Belongs to the RNA polymerase beta chain family.</text>
</comment>
<protein>
    <recommendedName>
        <fullName evidence="1">DNA-directed RNA polymerase subunit beta</fullName>
        <shortName evidence="1">RNAP subunit beta</shortName>
        <ecNumber evidence="1">2.7.7.6</ecNumber>
    </recommendedName>
    <alternativeName>
        <fullName evidence="1">RNA polymerase subunit beta</fullName>
    </alternativeName>
    <alternativeName>
        <fullName evidence="1">Transcriptase subunit beta</fullName>
    </alternativeName>
</protein>
<dbReference type="EC" id="2.7.7.6" evidence="1"/>
<dbReference type="EMBL" id="CU928162">
    <property type="protein sequence ID" value="CAR10801.2"/>
    <property type="molecule type" value="Genomic_DNA"/>
</dbReference>
<dbReference type="RefSeq" id="WP_012601822.1">
    <property type="nucleotide sequence ID" value="NC_011745.1"/>
</dbReference>
<dbReference type="SMR" id="B7MRB3"/>
<dbReference type="KEGG" id="ecq:ECED1_4694"/>
<dbReference type="HOGENOM" id="CLU_000524_4_3_6"/>
<dbReference type="Proteomes" id="UP000000748">
    <property type="component" value="Chromosome"/>
</dbReference>
<dbReference type="GO" id="GO:0000428">
    <property type="term" value="C:DNA-directed RNA polymerase complex"/>
    <property type="evidence" value="ECO:0007669"/>
    <property type="project" value="UniProtKB-KW"/>
</dbReference>
<dbReference type="GO" id="GO:0003677">
    <property type="term" value="F:DNA binding"/>
    <property type="evidence" value="ECO:0007669"/>
    <property type="project" value="UniProtKB-UniRule"/>
</dbReference>
<dbReference type="GO" id="GO:0003899">
    <property type="term" value="F:DNA-directed RNA polymerase activity"/>
    <property type="evidence" value="ECO:0007669"/>
    <property type="project" value="UniProtKB-UniRule"/>
</dbReference>
<dbReference type="GO" id="GO:0032549">
    <property type="term" value="F:ribonucleoside binding"/>
    <property type="evidence" value="ECO:0007669"/>
    <property type="project" value="InterPro"/>
</dbReference>
<dbReference type="GO" id="GO:0006351">
    <property type="term" value="P:DNA-templated transcription"/>
    <property type="evidence" value="ECO:0007669"/>
    <property type="project" value="UniProtKB-UniRule"/>
</dbReference>
<dbReference type="CDD" id="cd00653">
    <property type="entry name" value="RNA_pol_B_RPB2"/>
    <property type="match status" value="1"/>
</dbReference>
<dbReference type="FunFam" id="2.30.150.10:FF:000001">
    <property type="entry name" value="DNA-directed RNA polymerase subunit beta"/>
    <property type="match status" value="1"/>
</dbReference>
<dbReference type="FunFam" id="2.40.270.10:FF:000003">
    <property type="entry name" value="DNA-directed RNA polymerase subunit beta"/>
    <property type="match status" value="1"/>
</dbReference>
<dbReference type="FunFam" id="2.40.270.10:FF:000004">
    <property type="entry name" value="DNA-directed RNA polymerase subunit beta"/>
    <property type="match status" value="1"/>
</dbReference>
<dbReference type="FunFam" id="2.40.50.100:FF:000006">
    <property type="entry name" value="DNA-directed RNA polymerase subunit beta"/>
    <property type="match status" value="1"/>
</dbReference>
<dbReference type="FunFam" id="2.40.50.150:FF:000001">
    <property type="entry name" value="DNA-directed RNA polymerase subunit beta"/>
    <property type="match status" value="1"/>
</dbReference>
<dbReference type="FunFam" id="3.90.1100.10:FF:000002">
    <property type="entry name" value="DNA-directed RNA polymerase subunit beta"/>
    <property type="match status" value="1"/>
</dbReference>
<dbReference type="FunFam" id="3.90.1110.10:FF:000001">
    <property type="entry name" value="DNA-directed RNA polymerase subunit beta"/>
    <property type="match status" value="1"/>
</dbReference>
<dbReference type="FunFam" id="3.90.1110.10:FF:000004">
    <property type="entry name" value="DNA-directed RNA polymerase subunit beta"/>
    <property type="match status" value="1"/>
</dbReference>
<dbReference type="FunFam" id="3.90.1800.10:FF:000001">
    <property type="entry name" value="DNA-directed RNA polymerase subunit beta"/>
    <property type="match status" value="1"/>
</dbReference>
<dbReference type="Gene3D" id="2.40.50.100">
    <property type="match status" value="1"/>
</dbReference>
<dbReference type="Gene3D" id="2.40.50.150">
    <property type="match status" value="1"/>
</dbReference>
<dbReference type="Gene3D" id="3.90.1100.10">
    <property type="match status" value="2"/>
</dbReference>
<dbReference type="Gene3D" id="6.10.140.1670">
    <property type="match status" value="1"/>
</dbReference>
<dbReference type="Gene3D" id="2.30.150.10">
    <property type="entry name" value="DNA-directed RNA polymerase, beta subunit, external 1 domain"/>
    <property type="match status" value="1"/>
</dbReference>
<dbReference type="Gene3D" id="2.40.270.10">
    <property type="entry name" value="DNA-directed RNA polymerase, subunit 2, domain 6"/>
    <property type="match status" value="1"/>
</dbReference>
<dbReference type="Gene3D" id="3.90.1800.10">
    <property type="entry name" value="RNA polymerase alpha subunit dimerisation domain"/>
    <property type="match status" value="1"/>
</dbReference>
<dbReference type="Gene3D" id="3.90.1110.10">
    <property type="entry name" value="RNA polymerase Rpb2, domain 2"/>
    <property type="match status" value="1"/>
</dbReference>
<dbReference type="HAMAP" id="MF_01321">
    <property type="entry name" value="RNApol_bact_RpoB"/>
    <property type="match status" value="1"/>
</dbReference>
<dbReference type="InterPro" id="IPR042107">
    <property type="entry name" value="DNA-dir_RNA_pol_bsu_ext_1_sf"/>
</dbReference>
<dbReference type="InterPro" id="IPR019462">
    <property type="entry name" value="DNA-dir_RNA_pol_bsu_external_1"/>
</dbReference>
<dbReference type="InterPro" id="IPR015712">
    <property type="entry name" value="DNA-dir_RNA_pol_su2"/>
</dbReference>
<dbReference type="InterPro" id="IPR007120">
    <property type="entry name" value="DNA-dir_RNAP_su2_dom"/>
</dbReference>
<dbReference type="InterPro" id="IPR037033">
    <property type="entry name" value="DNA-dir_RNAP_su2_hyb_sf"/>
</dbReference>
<dbReference type="InterPro" id="IPR010243">
    <property type="entry name" value="RNA_pol_bsu_bac"/>
</dbReference>
<dbReference type="InterPro" id="IPR007121">
    <property type="entry name" value="RNA_pol_bsu_CS"/>
</dbReference>
<dbReference type="InterPro" id="IPR007644">
    <property type="entry name" value="RNA_pol_bsu_protrusion"/>
</dbReference>
<dbReference type="InterPro" id="IPR007642">
    <property type="entry name" value="RNA_pol_Rpb2_2"/>
</dbReference>
<dbReference type="InterPro" id="IPR037034">
    <property type="entry name" value="RNA_pol_Rpb2_2_sf"/>
</dbReference>
<dbReference type="InterPro" id="IPR007645">
    <property type="entry name" value="RNA_pol_Rpb2_3"/>
</dbReference>
<dbReference type="InterPro" id="IPR007641">
    <property type="entry name" value="RNA_pol_Rpb2_7"/>
</dbReference>
<dbReference type="InterPro" id="IPR014724">
    <property type="entry name" value="RNA_pol_RPB2_OB-fold"/>
</dbReference>
<dbReference type="NCBIfam" id="NF001616">
    <property type="entry name" value="PRK00405.1"/>
    <property type="match status" value="1"/>
</dbReference>
<dbReference type="NCBIfam" id="TIGR02013">
    <property type="entry name" value="rpoB"/>
    <property type="match status" value="1"/>
</dbReference>
<dbReference type="PANTHER" id="PTHR20856">
    <property type="entry name" value="DNA-DIRECTED RNA POLYMERASE I SUBUNIT 2"/>
    <property type="match status" value="1"/>
</dbReference>
<dbReference type="Pfam" id="PF04563">
    <property type="entry name" value="RNA_pol_Rpb2_1"/>
    <property type="match status" value="1"/>
</dbReference>
<dbReference type="Pfam" id="PF04561">
    <property type="entry name" value="RNA_pol_Rpb2_2"/>
    <property type="match status" value="2"/>
</dbReference>
<dbReference type="Pfam" id="PF04565">
    <property type="entry name" value="RNA_pol_Rpb2_3"/>
    <property type="match status" value="1"/>
</dbReference>
<dbReference type="Pfam" id="PF10385">
    <property type="entry name" value="RNA_pol_Rpb2_45"/>
    <property type="match status" value="1"/>
</dbReference>
<dbReference type="Pfam" id="PF00562">
    <property type="entry name" value="RNA_pol_Rpb2_6"/>
    <property type="match status" value="1"/>
</dbReference>
<dbReference type="Pfam" id="PF04560">
    <property type="entry name" value="RNA_pol_Rpb2_7"/>
    <property type="match status" value="1"/>
</dbReference>
<dbReference type="SUPFAM" id="SSF64484">
    <property type="entry name" value="beta and beta-prime subunits of DNA dependent RNA-polymerase"/>
    <property type="match status" value="1"/>
</dbReference>
<dbReference type="PROSITE" id="PS01166">
    <property type="entry name" value="RNA_POL_BETA"/>
    <property type="match status" value="1"/>
</dbReference>
<evidence type="ECO:0000255" key="1">
    <source>
        <dbReference type="HAMAP-Rule" id="MF_01321"/>
    </source>
</evidence>
<reference key="1">
    <citation type="journal article" date="2009" name="PLoS Genet.">
        <title>Organised genome dynamics in the Escherichia coli species results in highly diverse adaptive paths.</title>
        <authorList>
            <person name="Touchon M."/>
            <person name="Hoede C."/>
            <person name="Tenaillon O."/>
            <person name="Barbe V."/>
            <person name="Baeriswyl S."/>
            <person name="Bidet P."/>
            <person name="Bingen E."/>
            <person name="Bonacorsi S."/>
            <person name="Bouchier C."/>
            <person name="Bouvet O."/>
            <person name="Calteau A."/>
            <person name="Chiapello H."/>
            <person name="Clermont O."/>
            <person name="Cruveiller S."/>
            <person name="Danchin A."/>
            <person name="Diard M."/>
            <person name="Dossat C."/>
            <person name="Karoui M.E."/>
            <person name="Frapy E."/>
            <person name="Garry L."/>
            <person name="Ghigo J.M."/>
            <person name="Gilles A.M."/>
            <person name="Johnson J."/>
            <person name="Le Bouguenec C."/>
            <person name="Lescat M."/>
            <person name="Mangenot S."/>
            <person name="Martinez-Jehanne V."/>
            <person name="Matic I."/>
            <person name="Nassif X."/>
            <person name="Oztas S."/>
            <person name="Petit M.A."/>
            <person name="Pichon C."/>
            <person name="Rouy Z."/>
            <person name="Ruf C.S."/>
            <person name="Schneider D."/>
            <person name="Tourret J."/>
            <person name="Vacherie B."/>
            <person name="Vallenet D."/>
            <person name="Medigue C."/>
            <person name="Rocha E.P.C."/>
            <person name="Denamur E."/>
        </authorList>
    </citation>
    <scope>NUCLEOTIDE SEQUENCE [LARGE SCALE GENOMIC DNA]</scope>
    <source>
        <strain>ED1a</strain>
    </source>
</reference>
<gene>
    <name evidence="1" type="primary">rpoB</name>
    <name type="ordered locus">ECED1_4694</name>
</gene>
<accession>B7MRB3</accession>